<organism>
    <name type="scientific">Staphylococcus aureus (strain bovine RF122 / ET3-1)</name>
    <dbReference type="NCBI Taxonomy" id="273036"/>
    <lineage>
        <taxon>Bacteria</taxon>
        <taxon>Bacillati</taxon>
        <taxon>Bacillota</taxon>
        <taxon>Bacilli</taxon>
        <taxon>Bacillales</taxon>
        <taxon>Staphylococcaceae</taxon>
        <taxon>Staphylococcus</taxon>
    </lineage>
</organism>
<name>NANA_STAAB</name>
<comment type="function">
    <text evidence="1">Catalyzes the reversible aldol cleavage of N-acetylneuraminic acid (sialic acid; Neu5Ac) to form pyruvate and N-acetylmannosamine (ManNAc) via a Schiff base intermediate.</text>
</comment>
<comment type="catalytic activity">
    <reaction evidence="1">
        <text>aceneuramate = aldehydo-N-acetyl-D-mannosamine + pyruvate</text>
        <dbReference type="Rhea" id="RHEA:23296"/>
        <dbReference type="ChEBI" id="CHEBI:15361"/>
        <dbReference type="ChEBI" id="CHEBI:17122"/>
        <dbReference type="ChEBI" id="CHEBI:173083"/>
        <dbReference type="EC" id="4.1.3.3"/>
    </reaction>
</comment>
<comment type="pathway">
    <text evidence="1">Amino-sugar metabolism; N-acetylneuraminate degradation; D-fructose 6-phosphate from N-acetylneuraminate: step 1/5.</text>
</comment>
<comment type="subunit">
    <text evidence="1">Homotetramer.</text>
</comment>
<comment type="subcellular location">
    <subcellularLocation>
        <location evidence="1">Cytoplasm</location>
    </subcellularLocation>
</comment>
<comment type="similarity">
    <text evidence="1">Belongs to the DapA family. NanA subfamily.</text>
</comment>
<dbReference type="EC" id="4.1.3.3" evidence="1"/>
<dbReference type="EMBL" id="AJ938182">
    <property type="protein sequence ID" value="CAI79940.1"/>
    <property type="molecule type" value="Genomic_DNA"/>
</dbReference>
<dbReference type="RefSeq" id="WP_001030748.1">
    <property type="nucleotide sequence ID" value="NC_007622.1"/>
</dbReference>
<dbReference type="SMR" id="Q2YVB1"/>
<dbReference type="KEGG" id="sab:SAB0252c"/>
<dbReference type="HOGENOM" id="CLU_049343_5_1_9"/>
<dbReference type="UniPathway" id="UPA00629">
    <property type="reaction ID" value="UER00680"/>
</dbReference>
<dbReference type="GO" id="GO:0005829">
    <property type="term" value="C:cytosol"/>
    <property type="evidence" value="ECO:0007669"/>
    <property type="project" value="TreeGrafter"/>
</dbReference>
<dbReference type="GO" id="GO:0008747">
    <property type="term" value="F:N-acetylneuraminate lyase activity"/>
    <property type="evidence" value="ECO:0007669"/>
    <property type="project" value="UniProtKB-UniRule"/>
</dbReference>
<dbReference type="GO" id="GO:0005975">
    <property type="term" value="P:carbohydrate metabolic process"/>
    <property type="evidence" value="ECO:0007669"/>
    <property type="project" value="UniProtKB-UniRule"/>
</dbReference>
<dbReference type="GO" id="GO:0019262">
    <property type="term" value="P:N-acetylneuraminate catabolic process"/>
    <property type="evidence" value="ECO:0007669"/>
    <property type="project" value="UniProtKB-UniRule"/>
</dbReference>
<dbReference type="CDD" id="cd00954">
    <property type="entry name" value="NAL"/>
    <property type="match status" value="1"/>
</dbReference>
<dbReference type="FunFam" id="3.20.20.70:FF:000039">
    <property type="entry name" value="N-acetylneuraminate lyase"/>
    <property type="match status" value="1"/>
</dbReference>
<dbReference type="Gene3D" id="3.20.20.70">
    <property type="entry name" value="Aldolase class I"/>
    <property type="match status" value="1"/>
</dbReference>
<dbReference type="HAMAP" id="MF_01237">
    <property type="entry name" value="N_acetylneuram_lyase"/>
    <property type="match status" value="1"/>
</dbReference>
<dbReference type="InterPro" id="IPR013785">
    <property type="entry name" value="Aldolase_TIM"/>
</dbReference>
<dbReference type="InterPro" id="IPR002220">
    <property type="entry name" value="DapA-like"/>
</dbReference>
<dbReference type="InterPro" id="IPR005264">
    <property type="entry name" value="NanA"/>
</dbReference>
<dbReference type="InterPro" id="IPR020625">
    <property type="entry name" value="Schiff_base-form_aldolases_AS"/>
</dbReference>
<dbReference type="NCBIfam" id="NF003164">
    <property type="entry name" value="PRK04147.1"/>
    <property type="match status" value="1"/>
</dbReference>
<dbReference type="PANTHER" id="PTHR42849">
    <property type="entry name" value="N-ACETYLNEURAMINATE LYASE"/>
    <property type="match status" value="1"/>
</dbReference>
<dbReference type="PANTHER" id="PTHR42849:SF1">
    <property type="entry name" value="N-ACETYLNEURAMINATE LYASE"/>
    <property type="match status" value="1"/>
</dbReference>
<dbReference type="Pfam" id="PF00701">
    <property type="entry name" value="DHDPS"/>
    <property type="match status" value="1"/>
</dbReference>
<dbReference type="PIRSF" id="PIRSF001365">
    <property type="entry name" value="DHDPS"/>
    <property type="match status" value="1"/>
</dbReference>
<dbReference type="PRINTS" id="PR00146">
    <property type="entry name" value="DHPICSNTHASE"/>
</dbReference>
<dbReference type="SMART" id="SM01130">
    <property type="entry name" value="DHDPS"/>
    <property type="match status" value="1"/>
</dbReference>
<dbReference type="SUPFAM" id="SSF51569">
    <property type="entry name" value="Aldolase"/>
    <property type="match status" value="1"/>
</dbReference>
<dbReference type="PROSITE" id="PS00666">
    <property type="entry name" value="DHDPS_2"/>
    <property type="match status" value="1"/>
</dbReference>
<keyword id="KW-0119">Carbohydrate metabolism</keyword>
<keyword id="KW-0963">Cytoplasm</keyword>
<keyword id="KW-0456">Lyase</keyword>
<keyword id="KW-0704">Schiff base</keyword>
<evidence type="ECO:0000255" key="1">
    <source>
        <dbReference type="HAMAP-Rule" id="MF_01237"/>
    </source>
</evidence>
<proteinExistence type="inferred from homology"/>
<sequence>MNKDLKGLYAALLVPFDENGQVNEQGLKQIAQNTIETEELDGLYVNGSSGENFLLNTEQKKQVFKVAKEAVGDKVKLIAQVGSLDLNEAIELGKYATEIGYDALSAVTPFYYPFTFEEIRDYYFDIIEATQNNMIIYAIPDLTGVNISIEQFSELFNHEKIVGVKYTAPNFFLLERIRKAFPDKLILSGFDEMLVQATISGVDGAIGSTYNVNGRRARKIFDLARQGQIQEAYQLQHDSNDIIETVLSMGIYPTLKEILRHRGIDAGLPKRPFKPFNEAHRQTLDQLIAKYDL</sequence>
<gene>
    <name evidence="1" type="primary">nanA</name>
    <name type="ordered locus">SAB0252c</name>
</gene>
<feature type="chain" id="PRO_1000066939" description="N-acetylneuraminate lyase">
    <location>
        <begin position="1"/>
        <end position="293"/>
    </location>
</feature>
<feature type="active site" description="Proton donor" evidence="1">
    <location>
        <position position="137"/>
    </location>
</feature>
<feature type="active site" description="Schiff-base intermediate with substrate" evidence="1">
    <location>
        <position position="165"/>
    </location>
</feature>
<feature type="binding site" evidence="1">
    <location>
        <position position="48"/>
    </location>
    <ligand>
        <name>aceneuramate</name>
        <dbReference type="ChEBI" id="CHEBI:173083"/>
    </ligand>
</feature>
<feature type="binding site" evidence="1">
    <location>
        <position position="49"/>
    </location>
    <ligand>
        <name>aceneuramate</name>
        <dbReference type="ChEBI" id="CHEBI:173083"/>
    </ligand>
</feature>
<feature type="binding site" evidence="1">
    <location>
        <position position="167"/>
    </location>
    <ligand>
        <name>aceneuramate</name>
        <dbReference type="ChEBI" id="CHEBI:173083"/>
    </ligand>
</feature>
<feature type="binding site" evidence="1">
    <location>
        <position position="189"/>
    </location>
    <ligand>
        <name>aceneuramate</name>
        <dbReference type="ChEBI" id="CHEBI:173083"/>
    </ligand>
</feature>
<feature type="binding site" evidence="1">
    <location>
        <position position="191"/>
    </location>
    <ligand>
        <name>aceneuramate</name>
        <dbReference type="ChEBI" id="CHEBI:173083"/>
    </ligand>
</feature>
<feature type="binding site" evidence="1">
    <location>
        <position position="192"/>
    </location>
    <ligand>
        <name>aceneuramate</name>
        <dbReference type="ChEBI" id="CHEBI:173083"/>
    </ligand>
</feature>
<feature type="binding site" evidence="1">
    <location>
        <position position="208"/>
    </location>
    <ligand>
        <name>aceneuramate</name>
        <dbReference type="ChEBI" id="CHEBI:173083"/>
    </ligand>
</feature>
<reference key="1">
    <citation type="journal article" date="2007" name="PLoS ONE">
        <title>Molecular correlates of host specialization in Staphylococcus aureus.</title>
        <authorList>
            <person name="Herron-Olson L."/>
            <person name="Fitzgerald J.R."/>
            <person name="Musser J.M."/>
            <person name="Kapur V."/>
        </authorList>
    </citation>
    <scope>NUCLEOTIDE SEQUENCE [LARGE SCALE GENOMIC DNA]</scope>
    <source>
        <strain>bovine RF122 / ET3-1</strain>
    </source>
</reference>
<protein>
    <recommendedName>
        <fullName evidence="1">N-acetylneuraminate lyase</fullName>
        <shortName evidence="1">NAL</shortName>
        <shortName evidence="1">Neu5Ac lyase</shortName>
        <ecNumber evidence="1">4.1.3.3</ecNumber>
    </recommendedName>
    <alternativeName>
        <fullName evidence="1">N-acetylneuraminate pyruvate-lyase</fullName>
    </alternativeName>
    <alternativeName>
        <fullName evidence="1">N-acetylneuraminic acid aldolase</fullName>
    </alternativeName>
    <alternativeName>
        <fullName evidence="1">Sialate lyase</fullName>
    </alternativeName>
    <alternativeName>
        <fullName evidence="1">Sialic acid aldolase</fullName>
    </alternativeName>
    <alternativeName>
        <fullName evidence="1">Sialic acid lyase</fullName>
    </alternativeName>
</protein>
<accession>Q2YVB1</accession>